<proteinExistence type="evidence at transcript level"/>
<comment type="tissue specificity">
    <text>Mucosal mast cells.</text>
</comment>
<comment type="similarity">
    <text evidence="3">Belongs to the peptidase S1 family. Granzyme subfamily.</text>
</comment>
<evidence type="ECO:0000250" key="1"/>
<evidence type="ECO:0000255" key="2"/>
<evidence type="ECO:0000255" key="3">
    <source>
        <dbReference type="PROSITE-ProRule" id="PRU00274"/>
    </source>
</evidence>
<evidence type="ECO:0000305" key="4"/>
<keyword id="KW-1015">Disulfide bond</keyword>
<keyword id="KW-0325">Glycoprotein</keyword>
<keyword id="KW-0378">Hydrolase</keyword>
<keyword id="KW-0645">Protease</keyword>
<keyword id="KW-1185">Reference proteome</keyword>
<keyword id="KW-0720">Serine protease</keyword>
<keyword id="KW-0732">Signal</keyword>
<keyword id="KW-0865">Zymogen</keyword>
<accession>P15119</accession>
<dbReference type="EC" id="3.4.21.-"/>
<dbReference type="EMBL" id="J05177">
    <property type="protein sequence ID" value="AAA39972.1"/>
    <property type="molecule type" value="mRNA"/>
</dbReference>
<dbReference type="EMBL" id="L08486">
    <property type="protein sequence ID" value="AAA74555.1"/>
    <property type="molecule type" value="Genomic_DNA"/>
</dbReference>
<dbReference type="CCDS" id="CCDS27139.1"/>
<dbReference type="PIR" id="A34910">
    <property type="entry name" value="A34910"/>
</dbReference>
<dbReference type="PIR" id="A46721">
    <property type="entry name" value="A46721"/>
</dbReference>
<dbReference type="RefSeq" id="NP_032597.1">
    <property type="nucleotide sequence ID" value="NM_008571.2"/>
</dbReference>
<dbReference type="SMR" id="P15119"/>
<dbReference type="FunCoup" id="P15119">
    <property type="interactions" value="106"/>
</dbReference>
<dbReference type="STRING" id="10090.ENSMUSP00000015576"/>
<dbReference type="MEROPS" id="S01.003"/>
<dbReference type="GlyCosmos" id="P15119">
    <property type="glycosylation" value="1 site, No reported glycans"/>
</dbReference>
<dbReference type="GlyGen" id="P15119">
    <property type="glycosylation" value="1 site"/>
</dbReference>
<dbReference type="iPTMnet" id="P15119"/>
<dbReference type="PhosphoSitePlus" id="P15119"/>
<dbReference type="PaxDb" id="10090-ENSMUSP00000015576"/>
<dbReference type="ProteomicsDB" id="292197"/>
<dbReference type="DNASU" id="17225"/>
<dbReference type="Ensembl" id="ENSMUST00000015576.6">
    <property type="protein sequence ID" value="ENSMUSP00000015576.5"/>
    <property type="gene ID" value="ENSMUSG00000022226.7"/>
</dbReference>
<dbReference type="GeneID" id="17225"/>
<dbReference type="KEGG" id="mmu:17225"/>
<dbReference type="UCSC" id="uc007ubk.1">
    <property type="organism name" value="mouse"/>
</dbReference>
<dbReference type="AGR" id="MGI:96938"/>
<dbReference type="CTD" id="17225"/>
<dbReference type="MGI" id="MGI:96938">
    <property type="gene designation" value="Mcpt2"/>
</dbReference>
<dbReference type="VEuPathDB" id="HostDB:ENSMUSG00000022226"/>
<dbReference type="eggNOG" id="KOG3627">
    <property type="taxonomic scope" value="Eukaryota"/>
</dbReference>
<dbReference type="GeneTree" id="ENSGT01030000234551"/>
<dbReference type="HOGENOM" id="CLU_006842_1_0_1"/>
<dbReference type="InParanoid" id="P15119"/>
<dbReference type="OMA" id="NGSKERC"/>
<dbReference type="OrthoDB" id="5565075at2759"/>
<dbReference type="PhylomeDB" id="P15119"/>
<dbReference type="TreeFam" id="TF333630"/>
<dbReference type="BioGRID-ORCS" id="17225">
    <property type="hits" value="1 hit in 77 CRISPR screens"/>
</dbReference>
<dbReference type="PRO" id="PR:P15119"/>
<dbReference type="Proteomes" id="UP000000589">
    <property type="component" value="Chromosome 14"/>
</dbReference>
<dbReference type="RNAct" id="P15119">
    <property type="molecule type" value="protein"/>
</dbReference>
<dbReference type="Bgee" id="ENSMUSG00000022226">
    <property type="expression patterns" value="Expressed in mucous cell of stomach and 31 other cell types or tissues"/>
</dbReference>
<dbReference type="ExpressionAtlas" id="P15119">
    <property type="expression patterns" value="baseline and differential"/>
</dbReference>
<dbReference type="GO" id="GO:0004252">
    <property type="term" value="F:serine-type endopeptidase activity"/>
    <property type="evidence" value="ECO:0007669"/>
    <property type="project" value="InterPro"/>
</dbReference>
<dbReference type="GO" id="GO:0006508">
    <property type="term" value="P:proteolysis"/>
    <property type="evidence" value="ECO:0007669"/>
    <property type="project" value="UniProtKB-KW"/>
</dbReference>
<dbReference type="CDD" id="cd00190">
    <property type="entry name" value="Tryp_SPc"/>
    <property type="match status" value="1"/>
</dbReference>
<dbReference type="FunFam" id="2.40.10.10:FF:000014">
    <property type="entry name" value="Complement factor D"/>
    <property type="match status" value="1"/>
</dbReference>
<dbReference type="Gene3D" id="2.40.10.10">
    <property type="entry name" value="Trypsin-like serine proteases"/>
    <property type="match status" value="2"/>
</dbReference>
<dbReference type="InterPro" id="IPR009003">
    <property type="entry name" value="Peptidase_S1_PA"/>
</dbReference>
<dbReference type="InterPro" id="IPR043504">
    <property type="entry name" value="Peptidase_S1_PA_chymotrypsin"/>
</dbReference>
<dbReference type="InterPro" id="IPR001314">
    <property type="entry name" value="Peptidase_S1A"/>
</dbReference>
<dbReference type="InterPro" id="IPR001254">
    <property type="entry name" value="Trypsin_dom"/>
</dbReference>
<dbReference type="InterPro" id="IPR018114">
    <property type="entry name" value="TRYPSIN_HIS"/>
</dbReference>
<dbReference type="InterPro" id="IPR033116">
    <property type="entry name" value="TRYPSIN_SER"/>
</dbReference>
<dbReference type="PANTHER" id="PTHR24271:SF23">
    <property type="entry name" value="CHYMASE 2, MAST CELL-RELATED"/>
    <property type="match status" value="1"/>
</dbReference>
<dbReference type="PANTHER" id="PTHR24271">
    <property type="entry name" value="KALLIKREIN-RELATED"/>
    <property type="match status" value="1"/>
</dbReference>
<dbReference type="Pfam" id="PF00089">
    <property type="entry name" value="Trypsin"/>
    <property type="match status" value="1"/>
</dbReference>
<dbReference type="PRINTS" id="PR00722">
    <property type="entry name" value="CHYMOTRYPSIN"/>
</dbReference>
<dbReference type="SMART" id="SM00020">
    <property type="entry name" value="Tryp_SPc"/>
    <property type="match status" value="1"/>
</dbReference>
<dbReference type="SUPFAM" id="SSF50494">
    <property type="entry name" value="Trypsin-like serine proteases"/>
    <property type="match status" value="1"/>
</dbReference>
<dbReference type="PROSITE" id="PS50240">
    <property type="entry name" value="TRYPSIN_DOM"/>
    <property type="match status" value="1"/>
</dbReference>
<dbReference type="PROSITE" id="PS00134">
    <property type="entry name" value="TRYPSIN_HIS"/>
    <property type="match status" value="1"/>
</dbReference>
<dbReference type="PROSITE" id="PS00135">
    <property type="entry name" value="TRYPSIN_SER"/>
    <property type="match status" value="1"/>
</dbReference>
<feature type="signal peptide">
    <location>
        <begin position="1"/>
        <end position="18"/>
    </location>
</feature>
<feature type="propeptide" id="PRO_0000027451" description="Activation peptide">
    <location>
        <begin position="19"/>
        <end position="20"/>
    </location>
</feature>
<feature type="chain" id="PRO_0000027452" description="Mast cell protease 2">
    <location>
        <begin position="21"/>
        <end position="244"/>
    </location>
</feature>
<feature type="domain" description="Peptidase S1" evidence="3">
    <location>
        <begin position="21"/>
        <end position="242"/>
    </location>
</feature>
<feature type="active site" description="Charge relay system" evidence="1">
    <location>
        <position position="65"/>
    </location>
</feature>
<feature type="active site" description="Charge relay system" evidence="1">
    <location>
        <position position="109"/>
    </location>
</feature>
<feature type="active site" description="Charge relay system" evidence="1">
    <location>
        <position position="202"/>
    </location>
</feature>
<feature type="glycosylation site" description="N-linked (GlcNAc...) asparagine" evidence="2">
    <location>
        <position position="44"/>
    </location>
</feature>
<feature type="disulfide bond" evidence="3">
    <location>
        <begin position="50"/>
        <end position="66"/>
    </location>
</feature>
<feature type="disulfide bond" evidence="3">
    <location>
        <begin position="143"/>
        <end position="208"/>
    </location>
</feature>
<feature type="disulfide bond" evidence="3">
    <location>
        <begin position="174"/>
        <end position="187"/>
    </location>
</feature>
<feature type="sequence conflict" description="In Ref. 1; AAA39972." evidence="4" ref="1">
    <original>N</original>
    <variation>R</variation>
    <location>
        <position position="67"/>
    </location>
</feature>
<feature type="sequence conflict" description="In Ref. 1; AAA39972." evidence="4" ref="1">
    <original>Y</original>
    <variation>N</variation>
    <location>
        <position position="108"/>
    </location>
</feature>
<feature type="sequence conflict" description="In Ref. 1; AAA39972." evidence="4" ref="1">
    <original>S</original>
    <variation>N</variation>
    <location>
        <position position="178"/>
    </location>
</feature>
<feature type="sequence conflict" description="In Ref. 1; AAA39972." evidence="4" ref="1">
    <original>S</original>
    <variation>L</variation>
    <location>
        <position position="194"/>
    </location>
</feature>
<feature type="sequence conflict" description="In Ref. 1; AAA39972." evidence="4" ref="1">
    <original>S</original>
    <variation>G</variation>
    <location>
        <position position="210"/>
    </location>
</feature>
<organism>
    <name type="scientific">Mus musculus</name>
    <name type="common">Mouse</name>
    <dbReference type="NCBI Taxonomy" id="10090"/>
    <lineage>
        <taxon>Eukaryota</taxon>
        <taxon>Metazoa</taxon>
        <taxon>Chordata</taxon>
        <taxon>Craniata</taxon>
        <taxon>Vertebrata</taxon>
        <taxon>Euteleostomi</taxon>
        <taxon>Mammalia</taxon>
        <taxon>Eutheria</taxon>
        <taxon>Euarchontoglires</taxon>
        <taxon>Glires</taxon>
        <taxon>Rodentia</taxon>
        <taxon>Myomorpha</taxon>
        <taxon>Muroidea</taxon>
        <taxon>Muridae</taxon>
        <taxon>Murinae</taxon>
        <taxon>Mus</taxon>
        <taxon>Mus</taxon>
    </lineage>
</organism>
<protein>
    <recommendedName>
        <fullName>Mast cell protease 2</fullName>
        <shortName>mMCP-2</shortName>
        <ecNumber>3.4.21.-</ecNumber>
    </recommendedName>
</protein>
<reference key="1">
    <citation type="journal article" date="1990" name="J. Biol. Chem.">
        <title>Identification and molecular cloning of a novel mouse mucosal mast cell serine protease.</title>
        <authorList>
            <person name="Serafin W.E."/>
            <person name="Reynolds D.S."/>
            <person name="Rogelj S."/>
            <person name="Lane W.S."/>
            <person name="Conder G.A."/>
            <person name="Johnson S.S."/>
            <person name="Austen K.F."/>
            <person name="Stevens R.L."/>
        </authorList>
    </citation>
    <scope>NUCLEOTIDE SEQUENCE [MRNA]</scope>
</reference>
<reference key="2">
    <citation type="journal article" date="1993" name="J. Biol. Chem.">
        <title>A closely linked complex of mouse mast cell-specific chymase genes on chromosome 14.</title>
        <authorList>
            <person name="Gurish M.F."/>
            <person name="Nadeau J.H."/>
            <person name="Johnson K.R."/>
            <person name="McNeil H.P."/>
            <person name="Grattan K.M."/>
            <person name="Austen K.F."/>
            <person name="Stevens R.L."/>
        </authorList>
    </citation>
    <scope>NUCLEOTIDE SEQUENCE [GENOMIC DNA]</scope>
    <source>
        <strain>BALB/cJ</strain>
        <tissue>Hematopoietic</tissue>
    </source>
</reference>
<gene>
    <name type="primary">Mcpt2</name>
</gene>
<name>MCPT2_MOUSE</name>
<sequence length="244" mass="26732">MQALLFLMALLLPSGAGAEEIIGGVEAKPHSRPYMAYLKFTTKNGSKERCGGFLIAPQFVMTAAHCNGSEISVILGAHNINKNEPTQQIIKTEKTFVHPKFQYLSGFYDIMLLKLQKKAELNSDVDVISLPSSSDFIKPGKMCWTAGWGKTGKNNPLSVTLREVELRIMDQEACKDHSDYDYQLQVCAGSPTTSKSIGQGDSGGPLVCDSVAHGIASSYEAKAPAVFTRISYYLPWIYKVLKSK</sequence>